<dbReference type="EMBL" id="X12462">
    <property type="protein sequence ID" value="CAA31003.1"/>
    <property type="molecule type" value="Genomic_DNA"/>
</dbReference>
<dbReference type="EMBL" id="AF106329">
    <property type="protein sequence ID" value="AAA99213.2"/>
    <property type="molecule type" value="Genomic_DNA"/>
</dbReference>
<dbReference type="EMBL" id="AP001918">
    <property type="protein sequence ID" value="BAA97933.1"/>
    <property type="molecule type" value="Genomic_DNA"/>
</dbReference>
<dbReference type="PIR" id="S01898">
    <property type="entry name" value="S01898"/>
</dbReference>
<dbReference type="RefSeq" id="NP_061442.1">
    <property type="nucleotide sequence ID" value="NC_002483.1"/>
</dbReference>
<dbReference type="RefSeq" id="WP_010892539.1">
    <property type="nucleotide sequence ID" value="NC_002483.1"/>
</dbReference>
<dbReference type="PDB" id="3NCT">
    <property type="method" value="X-ray"/>
    <property type="resolution" value="2.20 A"/>
    <property type="chains" value="A/B/C/D=1-144"/>
</dbReference>
<dbReference type="PDBsum" id="3NCT"/>
<dbReference type="SMR" id="P10031"/>
<dbReference type="EvolutionaryTrace" id="P10031"/>
<dbReference type="Gene3D" id="3.40.50.11880">
    <property type="entry name" value="Plasmid SOS inhibition protein"/>
    <property type="match status" value="1"/>
</dbReference>
<dbReference type="InterPro" id="IPR009385">
    <property type="entry name" value="Plasmid_inh_PsiB"/>
</dbReference>
<dbReference type="InterPro" id="IPR038131">
    <property type="entry name" value="PsiB-like_sf"/>
</dbReference>
<dbReference type="NCBIfam" id="NF010255">
    <property type="entry name" value="PRK13701.1"/>
    <property type="match status" value="1"/>
</dbReference>
<dbReference type="Pfam" id="PF06290">
    <property type="entry name" value="PsiB"/>
    <property type="match status" value="1"/>
</dbReference>
<organism>
    <name type="scientific">Escherichia coli (strain K12)</name>
    <dbReference type="NCBI Taxonomy" id="83333"/>
    <lineage>
        <taxon>Bacteria</taxon>
        <taxon>Pseudomonadati</taxon>
        <taxon>Pseudomonadota</taxon>
        <taxon>Gammaproteobacteria</taxon>
        <taxon>Enterobacterales</taxon>
        <taxon>Enterobacteriaceae</taxon>
        <taxon>Escherichia</taxon>
    </lineage>
</organism>
<protein>
    <recommendedName>
        <fullName>Protein PsiB</fullName>
    </recommendedName>
</protein>
<reference key="1">
    <citation type="journal article" date="1988" name="Nucleic Acids Res.">
        <title>Identification of psiB genes of plasmids F and R6-5. Molecular basis for psiB enhanced expression in plasmid R6-5.</title>
        <authorList>
            <person name="Dutreix M."/>
            <person name="Baeckman A."/>
            <person name="Celerier J."/>
            <person name="Bagdasarian M.M."/>
            <person name="Sommer S."/>
            <person name="Bailone A."/>
            <person name="Devoret R."/>
            <person name="Bagdasarian M."/>
        </authorList>
    </citation>
    <scope>NUCLEOTIDE SEQUENCE [GENOMIC DNA]</scope>
</reference>
<reference key="2">
    <citation type="journal article" date="1999" name="Plasmid">
        <title>Nucleotide sequence of the F plasmid leading region.</title>
        <authorList>
            <person name="Manwaring N.P."/>
            <person name="Skurray R.A."/>
            <person name="Firth N."/>
        </authorList>
    </citation>
    <scope>NUCLEOTIDE SEQUENCE [GENOMIC DNA]</scope>
</reference>
<reference key="3">
    <citation type="submission" date="2000-04" db="EMBL/GenBank/DDBJ databases">
        <title>Complete nucleotide sequence of the F plasmid: its implications for organization and diversification of plasmid genomes.</title>
        <authorList>
            <person name="Shimizu H."/>
            <person name="Saitoh Y."/>
            <person name="Suda Y."/>
            <person name="Uehara K."/>
            <person name="Sampei G."/>
            <person name="Mizobuchi K."/>
        </authorList>
    </citation>
    <scope>NUCLEOTIDE SEQUENCE [LARGE SCALE GENOMIC DNA]</scope>
    <source>
        <strain>K12 / CR63</strain>
    </source>
</reference>
<comment type="function">
    <text>In contrast to PsiB protein of plasmid R6-5, this protein is unable to prevent SOS induction for potentially two reasons: less activity and/or insufficient expression.</text>
</comment>
<comment type="similarity">
    <text evidence="1">To PsiB protein of plasmid R6-5.</text>
</comment>
<feature type="chain" id="PRO_0000068428" description="Protein PsiB">
    <location>
        <begin position="1"/>
        <end position="144"/>
    </location>
</feature>
<feature type="helix" evidence="2">
    <location>
        <begin position="8"/>
        <end position="12"/>
    </location>
</feature>
<feature type="helix" evidence="2">
    <location>
        <begin position="15"/>
        <end position="24"/>
    </location>
</feature>
<feature type="helix" evidence="2">
    <location>
        <begin position="26"/>
        <end position="38"/>
    </location>
</feature>
<feature type="strand" evidence="2">
    <location>
        <begin position="46"/>
        <end position="50"/>
    </location>
</feature>
<feature type="strand" evidence="2">
    <location>
        <begin position="52"/>
        <end position="54"/>
    </location>
</feature>
<feature type="strand" evidence="2">
    <location>
        <begin position="60"/>
        <end position="68"/>
    </location>
</feature>
<feature type="strand" evidence="2">
    <location>
        <begin position="72"/>
        <end position="78"/>
    </location>
</feature>
<feature type="strand" evidence="2">
    <location>
        <begin position="80"/>
        <end position="83"/>
    </location>
</feature>
<feature type="strand" evidence="2">
    <location>
        <begin position="85"/>
        <end position="93"/>
    </location>
</feature>
<feature type="helix" evidence="2">
    <location>
        <begin position="94"/>
        <end position="96"/>
    </location>
</feature>
<feature type="strand" evidence="2">
    <location>
        <begin position="98"/>
        <end position="107"/>
    </location>
</feature>
<feature type="helix" evidence="2">
    <location>
        <begin position="110"/>
        <end position="125"/>
    </location>
</feature>
<feature type="helix" evidence="2">
    <location>
        <begin position="130"/>
        <end position="141"/>
    </location>
</feature>
<proteinExistence type="evidence at protein level"/>
<evidence type="ECO:0000305" key="1"/>
<evidence type="ECO:0007829" key="2">
    <source>
        <dbReference type="PDB" id="3NCT"/>
    </source>
</evidence>
<keyword id="KW-0002">3D-structure</keyword>
<keyword id="KW-0614">Plasmid</keyword>
<gene>
    <name type="primary">psiB</name>
    <name type="ordered locus">ECOK12F063</name>
</gene>
<name>PSIB1_ECOLI</name>
<accession>P10031</accession>
<sequence length="144" mass="15853">MKTELTLNVLQTMNAQEYEDIRAAGSDERRELTHAVMRELDAPDNWTMNGEYGSEFGGFFPVQVRFTPAHERFHLALCSPGDVSQVWVLVLVNAGGEPFAVVQVQRRFASEAVSHSLALAASLDTQGYSVNDIIHISMAEGGQV</sequence>
<geneLocation type="plasmid">
    <name>F</name>
</geneLocation>